<feature type="chain" id="PRO_0000094228" description="Elongation factor P 2">
    <location>
        <begin position="1"/>
        <end position="190"/>
    </location>
</feature>
<accession>Q9PLH1</accession>
<dbReference type="EMBL" id="AE002160">
    <property type="protein sequence ID" value="AAF39011.1"/>
    <property type="molecule type" value="Genomic_DNA"/>
</dbReference>
<dbReference type="PIR" id="B81738">
    <property type="entry name" value="B81738"/>
</dbReference>
<dbReference type="SMR" id="Q9PLH1"/>
<dbReference type="GeneID" id="1245666"/>
<dbReference type="KEGG" id="cmu:TC_0133"/>
<dbReference type="eggNOG" id="COG0231">
    <property type="taxonomic scope" value="Bacteria"/>
</dbReference>
<dbReference type="HOGENOM" id="CLU_074944_0_0_0"/>
<dbReference type="OrthoDB" id="9801844at2"/>
<dbReference type="UniPathway" id="UPA00345"/>
<dbReference type="Proteomes" id="UP000000800">
    <property type="component" value="Chromosome"/>
</dbReference>
<dbReference type="GO" id="GO:0005737">
    <property type="term" value="C:cytoplasm"/>
    <property type="evidence" value="ECO:0007669"/>
    <property type="project" value="UniProtKB-SubCell"/>
</dbReference>
<dbReference type="GO" id="GO:0003746">
    <property type="term" value="F:translation elongation factor activity"/>
    <property type="evidence" value="ECO:0007669"/>
    <property type="project" value="UniProtKB-UniRule"/>
</dbReference>
<dbReference type="GO" id="GO:0043043">
    <property type="term" value="P:peptide biosynthetic process"/>
    <property type="evidence" value="ECO:0007669"/>
    <property type="project" value="InterPro"/>
</dbReference>
<dbReference type="CDD" id="cd04470">
    <property type="entry name" value="S1_EF-P_repeat_1"/>
    <property type="match status" value="1"/>
</dbReference>
<dbReference type="CDD" id="cd05794">
    <property type="entry name" value="S1_EF-P_repeat_2"/>
    <property type="match status" value="1"/>
</dbReference>
<dbReference type="FunFam" id="2.30.30.30:FF:000003">
    <property type="entry name" value="Elongation factor P"/>
    <property type="match status" value="1"/>
</dbReference>
<dbReference type="FunFam" id="2.40.50.140:FF:000004">
    <property type="entry name" value="Elongation factor P"/>
    <property type="match status" value="1"/>
</dbReference>
<dbReference type="FunFam" id="2.40.50.140:FF:000009">
    <property type="entry name" value="Elongation factor P"/>
    <property type="match status" value="1"/>
</dbReference>
<dbReference type="Gene3D" id="2.30.30.30">
    <property type="match status" value="1"/>
</dbReference>
<dbReference type="Gene3D" id="2.40.50.140">
    <property type="entry name" value="Nucleic acid-binding proteins"/>
    <property type="match status" value="2"/>
</dbReference>
<dbReference type="HAMAP" id="MF_00141">
    <property type="entry name" value="EF_P"/>
    <property type="match status" value="1"/>
</dbReference>
<dbReference type="InterPro" id="IPR015365">
    <property type="entry name" value="Elong-fact-P_C"/>
</dbReference>
<dbReference type="InterPro" id="IPR012340">
    <property type="entry name" value="NA-bd_OB-fold"/>
</dbReference>
<dbReference type="InterPro" id="IPR014722">
    <property type="entry name" value="Rib_uL2_dom2"/>
</dbReference>
<dbReference type="InterPro" id="IPR020599">
    <property type="entry name" value="Transl_elong_fac_P/YeiP"/>
</dbReference>
<dbReference type="InterPro" id="IPR013185">
    <property type="entry name" value="Transl_elong_KOW-like"/>
</dbReference>
<dbReference type="InterPro" id="IPR001059">
    <property type="entry name" value="Transl_elong_P/YeiP_cen"/>
</dbReference>
<dbReference type="InterPro" id="IPR013852">
    <property type="entry name" value="Transl_elong_P/YeiP_CS"/>
</dbReference>
<dbReference type="InterPro" id="IPR011768">
    <property type="entry name" value="Transl_elongation_fac_P"/>
</dbReference>
<dbReference type="InterPro" id="IPR008991">
    <property type="entry name" value="Translation_prot_SH3-like_sf"/>
</dbReference>
<dbReference type="NCBIfam" id="TIGR00038">
    <property type="entry name" value="efp"/>
    <property type="match status" value="1"/>
</dbReference>
<dbReference type="NCBIfam" id="NF001810">
    <property type="entry name" value="PRK00529.1"/>
    <property type="match status" value="1"/>
</dbReference>
<dbReference type="PANTHER" id="PTHR30053">
    <property type="entry name" value="ELONGATION FACTOR P"/>
    <property type="match status" value="1"/>
</dbReference>
<dbReference type="PANTHER" id="PTHR30053:SF12">
    <property type="entry name" value="ELONGATION FACTOR P (EF-P) FAMILY PROTEIN"/>
    <property type="match status" value="1"/>
</dbReference>
<dbReference type="Pfam" id="PF01132">
    <property type="entry name" value="EFP"/>
    <property type="match status" value="1"/>
</dbReference>
<dbReference type="Pfam" id="PF08207">
    <property type="entry name" value="EFP_N"/>
    <property type="match status" value="1"/>
</dbReference>
<dbReference type="Pfam" id="PF09285">
    <property type="entry name" value="Elong-fact-P_C"/>
    <property type="match status" value="1"/>
</dbReference>
<dbReference type="PIRSF" id="PIRSF005901">
    <property type="entry name" value="EF-P"/>
    <property type="match status" value="1"/>
</dbReference>
<dbReference type="SMART" id="SM01185">
    <property type="entry name" value="EFP"/>
    <property type="match status" value="1"/>
</dbReference>
<dbReference type="SMART" id="SM00841">
    <property type="entry name" value="Elong-fact-P_C"/>
    <property type="match status" value="1"/>
</dbReference>
<dbReference type="SUPFAM" id="SSF50249">
    <property type="entry name" value="Nucleic acid-binding proteins"/>
    <property type="match status" value="2"/>
</dbReference>
<dbReference type="SUPFAM" id="SSF50104">
    <property type="entry name" value="Translation proteins SH3-like domain"/>
    <property type="match status" value="1"/>
</dbReference>
<dbReference type="PROSITE" id="PS01275">
    <property type="entry name" value="EFP"/>
    <property type="match status" value="1"/>
</dbReference>
<gene>
    <name type="primary">efp2</name>
    <name type="ordered locus">TC_0133</name>
</gene>
<organism>
    <name type="scientific">Chlamydia muridarum (strain MoPn / Nigg)</name>
    <dbReference type="NCBI Taxonomy" id="243161"/>
    <lineage>
        <taxon>Bacteria</taxon>
        <taxon>Pseudomonadati</taxon>
        <taxon>Chlamydiota</taxon>
        <taxon>Chlamydiia</taxon>
        <taxon>Chlamydiales</taxon>
        <taxon>Chlamydiaceae</taxon>
        <taxon>Chlamydia/Chlamydophila group</taxon>
        <taxon>Chlamydia</taxon>
    </lineage>
</organism>
<comment type="function">
    <text evidence="1">Involved in peptide bond synthesis. Stimulates efficient translation and peptide-bond synthesis on native or reconstituted 70S ribosomes in vitro. Probably functions indirectly by altering the affinity of the ribosome for aminoacyl-tRNA, thus increasing their reactivity as acceptors for peptidyl transferase (By similarity).</text>
</comment>
<comment type="pathway">
    <text>Protein biosynthesis; polypeptide chain elongation.</text>
</comment>
<comment type="subcellular location">
    <subcellularLocation>
        <location evidence="1">Cytoplasm</location>
    </subcellularLocation>
</comment>
<comment type="similarity">
    <text evidence="2">Belongs to the elongation factor P family.</text>
</comment>
<sequence length="190" mass="21551">MVRVSTSEFRVGLRVEIDGQPYVILQNDFVKPGKGQAFNRIKVKNFLTGRVIEKTFKSGESIETADVREQQMRLLYTDQEGATFMDDETFEQELIFWDKLENIRQWLLEDTVYTLVRYNGDVISVEPPIFMELSIAETAPGVRGDTASGRVLKPATTNTGAKIMVPIFIEEGEVVKVDTRTGSYESRVSK</sequence>
<protein>
    <recommendedName>
        <fullName>Elongation factor P 2</fullName>
        <shortName>EF-P 2</shortName>
    </recommendedName>
</protein>
<keyword id="KW-0963">Cytoplasm</keyword>
<keyword id="KW-0251">Elongation factor</keyword>
<keyword id="KW-0648">Protein biosynthesis</keyword>
<reference key="1">
    <citation type="journal article" date="2000" name="Nucleic Acids Res.">
        <title>Genome sequences of Chlamydia trachomatis MoPn and Chlamydia pneumoniae AR39.</title>
        <authorList>
            <person name="Read T.D."/>
            <person name="Brunham R.C."/>
            <person name="Shen C."/>
            <person name="Gill S.R."/>
            <person name="Heidelberg J.F."/>
            <person name="White O."/>
            <person name="Hickey E.K."/>
            <person name="Peterson J.D."/>
            <person name="Utterback T.R."/>
            <person name="Berry K.J."/>
            <person name="Bass S."/>
            <person name="Linher K.D."/>
            <person name="Weidman J.F."/>
            <person name="Khouri H.M."/>
            <person name="Craven B."/>
            <person name="Bowman C."/>
            <person name="Dodson R.J."/>
            <person name="Gwinn M.L."/>
            <person name="Nelson W.C."/>
            <person name="DeBoy R.T."/>
            <person name="Kolonay J.F."/>
            <person name="McClarty G."/>
            <person name="Salzberg S.L."/>
            <person name="Eisen J.A."/>
            <person name="Fraser C.M."/>
        </authorList>
    </citation>
    <scope>NUCLEOTIDE SEQUENCE [LARGE SCALE GENOMIC DNA]</scope>
    <source>
        <strain>MoPn / Nigg</strain>
    </source>
</reference>
<name>EFP2_CHLMU</name>
<evidence type="ECO:0000250" key="1"/>
<evidence type="ECO:0000305" key="2"/>
<proteinExistence type="inferred from homology"/>